<organism>
    <name type="scientific">Drosophila melanogaster</name>
    <name type="common">Fruit fly</name>
    <dbReference type="NCBI Taxonomy" id="7227"/>
    <lineage>
        <taxon>Eukaryota</taxon>
        <taxon>Metazoa</taxon>
        <taxon>Ecdysozoa</taxon>
        <taxon>Arthropoda</taxon>
        <taxon>Hexapoda</taxon>
        <taxon>Insecta</taxon>
        <taxon>Pterygota</taxon>
        <taxon>Neoptera</taxon>
        <taxon>Endopterygota</taxon>
        <taxon>Diptera</taxon>
        <taxon>Brachycera</taxon>
        <taxon>Muscomorpha</taxon>
        <taxon>Ephydroidea</taxon>
        <taxon>Drosophilidae</taxon>
        <taxon>Drosophila</taxon>
        <taxon>Sophophora</taxon>
    </lineage>
</organism>
<feature type="chain" id="PRO_0000342388" description="CIMIP2 protein CG18335">
    <location>
        <begin position="1"/>
        <end position="323"/>
    </location>
</feature>
<comment type="function">
    <text evidence="1">Probable microtubule inner protein (MIP) part of the dynein-decorated doublet microtubules (DMTs) in cilium axoneme.</text>
</comment>
<comment type="subcellular location">
    <subcellularLocation>
        <location evidence="1">Cytoplasm</location>
        <location evidence="1">Cytoskeleton</location>
        <location evidence="1">Cilium axoneme</location>
    </subcellularLocation>
</comment>
<comment type="similarity">
    <text evidence="2">Belongs to the CIMIP2 family.</text>
</comment>
<sequence>MDHAITPEPHLVPGYTGHCAQNRDRVGRTYGRQTHKLLIDPCIYHAPELIVAPIHAKRGLKDYPTEQELKILRTREGLVDSVYRHPILPGYAGFVPNKVSQIGKRYVAAASAGVARHETLMELYRCENRTLRHRDLLESGNGLFDRKINERLLPQTYYRSPLILVTGVSKGIKDETCPPKTEKLCYSKFTSPHFLEDEDADKFIINGYSGHIPMSVTRFGESNKVLTNRALCSFSDYMYKRKRDTWCCGQDLSRPSITCPPVGHFVVYHEDSGMVPNYAGHVPGETYKFGRTYAKTTYDAKRWLEVHKNLTVLPEVANLDYAY</sequence>
<name>CMIP2_DROME</name>
<keyword id="KW-0966">Cell projection</keyword>
<keyword id="KW-0963">Cytoplasm</keyword>
<keyword id="KW-0206">Cytoskeleton</keyword>
<keyword id="KW-1185">Reference proteome</keyword>
<accession>Q7JRP4</accession>
<dbReference type="EMBL" id="AE013599">
    <property type="protein sequence ID" value="AAF58679.2"/>
    <property type="molecule type" value="Genomic_DNA"/>
</dbReference>
<dbReference type="EMBL" id="BT001366">
    <property type="protein sequence ID" value="AAN71121.1"/>
    <property type="molecule type" value="mRNA"/>
</dbReference>
<dbReference type="EMBL" id="BT012323">
    <property type="protein sequence ID" value="AAS77448.1"/>
    <property type="molecule type" value="mRNA"/>
</dbReference>
<dbReference type="RefSeq" id="NP_610666.1">
    <property type="nucleotide sequence ID" value="NM_136822.4"/>
</dbReference>
<dbReference type="IntAct" id="Q7JRP4">
    <property type="interactions" value="3"/>
</dbReference>
<dbReference type="STRING" id="7227.FBpp0087273"/>
<dbReference type="PaxDb" id="7227-FBpp0087273"/>
<dbReference type="DNASU" id="36202"/>
<dbReference type="EnsemblMetazoa" id="FBtr0088177">
    <property type="protein sequence ID" value="FBpp0087273"/>
    <property type="gene ID" value="FBgn0033610"/>
</dbReference>
<dbReference type="GeneID" id="36202"/>
<dbReference type="KEGG" id="dme:Dmel_CG18335"/>
<dbReference type="UCSC" id="CG18335-RA">
    <property type="organism name" value="d. melanogaster"/>
</dbReference>
<dbReference type="AGR" id="FB:FBgn0033610"/>
<dbReference type="FlyBase" id="FBgn0033610">
    <property type="gene designation" value="CG18335"/>
</dbReference>
<dbReference type="VEuPathDB" id="VectorBase:FBgn0033610"/>
<dbReference type="eggNOG" id="ENOG502RTSD">
    <property type="taxonomic scope" value="Eukaryota"/>
</dbReference>
<dbReference type="GeneTree" id="ENSGT00940000166013"/>
<dbReference type="HOGENOM" id="CLU_065650_1_0_1"/>
<dbReference type="InParanoid" id="Q7JRP4"/>
<dbReference type="OMA" id="CCGQDLT"/>
<dbReference type="OrthoDB" id="2019884at2759"/>
<dbReference type="PhylomeDB" id="Q7JRP4"/>
<dbReference type="BioGRID-ORCS" id="36202">
    <property type="hits" value="0 hits in 3 CRISPR screens"/>
</dbReference>
<dbReference type="ChiTaRS" id="CG18335">
    <property type="organism name" value="fly"/>
</dbReference>
<dbReference type="GenomeRNAi" id="36202"/>
<dbReference type="PRO" id="PR:Q7JRP4"/>
<dbReference type="Proteomes" id="UP000000803">
    <property type="component" value="Chromosome 2R"/>
</dbReference>
<dbReference type="Bgee" id="FBgn0033610">
    <property type="expression patterns" value="Expressed in early-mid elongation-stage spermatid (Drosophila) in testis and 19 other cell types or tissues"/>
</dbReference>
<dbReference type="GO" id="GO:0042995">
    <property type="term" value="C:cell projection"/>
    <property type="evidence" value="ECO:0007669"/>
    <property type="project" value="UniProtKB-KW"/>
</dbReference>
<dbReference type="GO" id="GO:0005737">
    <property type="term" value="C:cytoplasm"/>
    <property type="evidence" value="ECO:0007669"/>
    <property type="project" value="UniProtKB-KW"/>
</dbReference>
<dbReference type="GO" id="GO:0015630">
    <property type="term" value="C:microtubule cytoskeleton"/>
    <property type="evidence" value="ECO:0007669"/>
    <property type="project" value="UniProtKB-ARBA"/>
</dbReference>
<dbReference type="InterPro" id="IPR018902">
    <property type="entry name" value="CMI2A-C-like_dom"/>
</dbReference>
<dbReference type="PANTHER" id="PTHR22146">
    <property type="entry name" value="CAT EYE SYNDROME CRITICAL REGION PROTEIN 6"/>
    <property type="match status" value="1"/>
</dbReference>
<dbReference type="PANTHER" id="PTHR22146:SF8">
    <property type="entry name" value="PROTEIN FAM166B"/>
    <property type="match status" value="1"/>
</dbReference>
<dbReference type="Pfam" id="PF10629">
    <property type="entry name" value="CMI2B-like"/>
    <property type="match status" value="1"/>
</dbReference>
<proteinExistence type="evidence at transcript level"/>
<protein>
    <recommendedName>
        <fullName>CIMIP2 protein CG18335</fullName>
    </recommendedName>
</protein>
<evidence type="ECO:0000250" key="1">
    <source>
        <dbReference type="UniProtKB" id="G3X6E2"/>
    </source>
</evidence>
<evidence type="ECO:0000305" key="2"/>
<reference key="1">
    <citation type="journal article" date="2000" name="Science">
        <title>The genome sequence of Drosophila melanogaster.</title>
        <authorList>
            <person name="Adams M.D."/>
            <person name="Celniker S.E."/>
            <person name="Holt R.A."/>
            <person name="Evans C.A."/>
            <person name="Gocayne J.D."/>
            <person name="Amanatides P.G."/>
            <person name="Scherer S.E."/>
            <person name="Li P.W."/>
            <person name="Hoskins R.A."/>
            <person name="Galle R.F."/>
            <person name="George R.A."/>
            <person name="Lewis S.E."/>
            <person name="Richards S."/>
            <person name="Ashburner M."/>
            <person name="Henderson S.N."/>
            <person name="Sutton G.G."/>
            <person name="Wortman J.R."/>
            <person name="Yandell M.D."/>
            <person name="Zhang Q."/>
            <person name="Chen L.X."/>
            <person name="Brandon R.C."/>
            <person name="Rogers Y.-H.C."/>
            <person name="Blazej R.G."/>
            <person name="Champe M."/>
            <person name="Pfeiffer B.D."/>
            <person name="Wan K.H."/>
            <person name="Doyle C."/>
            <person name="Baxter E.G."/>
            <person name="Helt G."/>
            <person name="Nelson C.R."/>
            <person name="Miklos G.L.G."/>
            <person name="Abril J.F."/>
            <person name="Agbayani A."/>
            <person name="An H.-J."/>
            <person name="Andrews-Pfannkoch C."/>
            <person name="Baldwin D."/>
            <person name="Ballew R.M."/>
            <person name="Basu A."/>
            <person name="Baxendale J."/>
            <person name="Bayraktaroglu L."/>
            <person name="Beasley E.M."/>
            <person name="Beeson K.Y."/>
            <person name="Benos P.V."/>
            <person name="Berman B.P."/>
            <person name="Bhandari D."/>
            <person name="Bolshakov S."/>
            <person name="Borkova D."/>
            <person name="Botchan M.R."/>
            <person name="Bouck J."/>
            <person name="Brokstein P."/>
            <person name="Brottier P."/>
            <person name="Burtis K.C."/>
            <person name="Busam D.A."/>
            <person name="Butler H."/>
            <person name="Cadieu E."/>
            <person name="Center A."/>
            <person name="Chandra I."/>
            <person name="Cherry J.M."/>
            <person name="Cawley S."/>
            <person name="Dahlke C."/>
            <person name="Davenport L.B."/>
            <person name="Davies P."/>
            <person name="de Pablos B."/>
            <person name="Delcher A."/>
            <person name="Deng Z."/>
            <person name="Mays A.D."/>
            <person name="Dew I."/>
            <person name="Dietz S.M."/>
            <person name="Dodson K."/>
            <person name="Doup L.E."/>
            <person name="Downes M."/>
            <person name="Dugan-Rocha S."/>
            <person name="Dunkov B.C."/>
            <person name="Dunn P."/>
            <person name="Durbin K.J."/>
            <person name="Evangelista C.C."/>
            <person name="Ferraz C."/>
            <person name="Ferriera S."/>
            <person name="Fleischmann W."/>
            <person name="Fosler C."/>
            <person name="Gabrielian A.E."/>
            <person name="Garg N.S."/>
            <person name="Gelbart W.M."/>
            <person name="Glasser K."/>
            <person name="Glodek A."/>
            <person name="Gong F."/>
            <person name="Gorrell J.H."/>
            <person name="Gu Z."/>
            <person name="Guan P."/>
            <person name="Harris M."/>
            <person name="Harris N.L."/>
            <person name="Harvey D.A."/>
            <person name="Heiman T.J."/>
            <person name="Hernandez J.R."/>
            <person name="Houck J."/>
            <person name="Hostin D."/>
            <person name="Houston K.A."/>
            <person name="Howland T.J."/>
            <person name="Wei M.-H."/>
            <person name="Ibegwam C."/>
            <person name="Jalali M."/>
            <person name="Kalush F."/>
            <person name="Karpen G.H."/>
            <person name="Ke Z."/>
            <person name="Kennison J.A."/>
            <person name="Ketchum K.A."/>
            <person name="Kimmel B.E."/>
            <person name="Kodira C.D."/>
            <person name="Kraft C.L."/>
            <person name="Kravitz S."/>
            <person name="Kulp D."/>
            <person name="Lai Z."/>
            <person name="Lasko P."/>
            <person name="Lei Y."/>
            <person name="Levitsky A.A."/>
            <person name="Li J.H."/>
            <person name="Li Z."/>
            <person name="Liang Y."/>
            <person name="Lin X."/>
            <person name="Liu X."/>
            <person name="Mattei B."/>
            <person name="McIntosh T.C."/>
            <person name="McLeod M.P."/>
            <person name="McPherson D."/>
            <person name="Merkulov G."/>
            <person name="Milshina N.V."/>
            <person name="Mobarry C."/>
            <person name="Morris J."/>
            <person name="Moshrefi A."/>
            <person name="Mount S.M."/>
            <person name="Moy M."/>
            <person name="Murphy B."/>
            <person name="Murphy L."/>
            <person name="Muzny D.M."/>
            <person name="Nelson D.L."/>
            <person name="Nelson D.R."/>
            <person name="Nelson K.A."/>
            <person name="Nixon K."/>
            <person name="Nusskern D.R."/>
            <person name="Pacleb J.M."/>
            <person name="Palazzolo M."/>
            <person name="Pittman G.S."/>
            <person name="Pan S."/>
            <person name="Pollard J."/>
            <person name="Puri V."/>
            <person name="Reese M.G."/>
            <person name="Reinert K."/>
            <person name="Remington K."/>
            <person name="Saunders R.D.C."/>
            <person name="Scheeler F."/>
            <person name="Shen H."/>
            <person name="Shue B.C."/>
            <person name="Siden-Kiamos I."/>
            <person name="Simpson M."/>
            <person name="Skupski M.P."/>
            <person name="Smith T.J."/>
            <person name="Spier E."/>
            <person name="Spradling A.C."/>
            <person name="Stapleton M."/>
            <person name="Strong R."/>
            <person name="Sun E."/>
            <person name="Svirskas R."/>
            <person name="Tector C."/>
            <person name="Turner R."/>
            <person name="Venter E."/>
            <person name="Wang A.H."/>
            <person name="Wang X."/>
            <person name="Wang Z.-Y."/>
            <person name="Wassarman D.A."/>
            <person name="Weinstock G.M."/>
            <person name="Weissenbach J."/>
            <person name="Williams S.M."/>
            <person name="Woodage T."/>
            <person name="Worley K.C."/>
            <person name="Wu D."/>
            <person name="Yang S."/>
            <person name="Yao Q.A."/>
            <person name="Ye J."/>
            <person name="Yeh R.-F."/>
            <person name="Zaveri J.S."/>
            <person name="Zhan M."/>
            <person name="Zhang G."/>
            <person name="Zhao Q."/>
            <person name="Zheng L."/>
            <person name="Zheng X.H."/>
            <person name="Zhong F.N."/>
            <person name="Zhong W."/>
            <person name="Zhou X."/>
            <person name="Zhu S.C."/>
            <person name="Zhu X."/>
            <person name="Smith H.O."/>
            <person name="Gibbs R.A."/>
            <person name="Myers E.W."/>
            <person name="Rubin G.M."/>
            <person name="Venter J.C."/>
        </authorList>
    </citation>
    <scope>NUCLEOTIDE SEQUENCE [LARGE SCALE GENOMIC DNA]</scope>
    <source>
        <strain>Berkeley</strain>
    </source>
</reference>
<reference key="2">
    <citation type="journal article" date="2002" name="Genome Biol.">
        <title>Annotation of the Drosophila melanogaster euchromatic genome: a systematic review.</title>
        <authorList>
            <person name="Misra S."/>
            <person name="Crosby M.A."/>
            <person name="Mungall C.J."/>
            <person name="Matthews B.B."/>
            <person name="Campbell K.S."/>
            <person name="Hradecky P."/>
            <person name="Huang Y."/>
            <person name="Kaminker J.S."/>
            <person name="Millburn G.H."/>
            <person name="Prochnik S.E."/>
            <person name="Smith C.D."/>
            <person name="Tupy J.L."/>
            <person name="Whitfield E.J."/>
            <person name="Bayraktaroglu L."/>
            <person name="Berman B.P."/>
            <person name="Bettencourt B.R."/>
            <person name="Celniker S.E."/>
            <person name="de Grey A.D.N.J."/>
            <person name="Drysdale R.A."/>
            <person name="Harris N.L."/>
            <person name="Richter J."/>
            <person name="Russo S."/>
            <person name="Schroeder A.J."/>
            <person name="Shu S.Q."/>
            <person name="Stapleton M."/>
            <person name="Yamada C."/>
            <person name="Ashburner M."/>
            <person name="Gelbart W.M."/>
            <person name="Rubin G.M."/>
            <person name="Lewis S.E."/>
        </authorList>
    </citation>
    <scope>GENOME REANNOTATION</scope>
    <source>
        <strain>Berkeley</strain>
    </source>
</reference>
<reference key="3">
    <citation type="journal article" date="2002" name="Genome Biol.">
        <title>A Drosophila full-length cDNA resource.</title>
        <authorList>
            <person name="Stapleton M."/>
            <person name="Carlson J.W."/>
            <person name="Brokstein P."/>
            <person name="Yu C."/>
            <person name="Champe M."/>
            <person name="George R.A."/>
            <person name="Guarin H."/>
            <person name="Kronmiller B."/>
            <person name="Pacleb J.M."/>
            <person name="Park S."/>
            <person name="Wan K.H."/>
            <person name="Rubin G.M."/>
            <person name="Celniker S.E."/>
        </authorList>
    </citation>
    <scope>NUCLEOTIDE SEQUENCE [LARGE SCALE MRNA]</scope>
    <source>
        <strain>Berkeley</strain>
        <tissue>Testis</tissue>
    </source>
</reference>
<gene>
    <name type="ORF">CG18335</name>
</gene>